<sequence>MSSGKIAQVVGPVVDVMFASGDKLPEINNALIVYKDSDKKQKIVLEVALELGDGMVRTIAMESTDGLTRGLEVLDTGRAISVPVGKETLGRVFNVLGETIDLEEPFAEDVDRQPIHKKAPSFDELSTSSEILETGIKVIDLLAPYLKGGKVGLFGGAGVGKTVLIQELIHNIAQEHGGISVFTGVGERTREGNDLYWEMKESGVIEKTAMVFGQMNEPPGARMRVALTGLTIAEYFRDVEGQDVLLFIDNIFRFTQAGSEVSALLGRMPSAVGYQPTLATEMGQLQERITSTQKGSVTSIQAIYVPADDYTDPAPATAFAHLDSTTNLERKLTQMGIYPAVDPLASSSRALSPEIVGEEHYAVATEVQRVLQRYRELQDIIAILGMDELSDEEKTLVGRARRIQFFLSQNFNVAEQFTGLPGSYVPVAETVRGFKEILEGKYDDLPEDAFRSVGPIEDVIKKAEKMGF</sequence>
<reference key="1">
    <citation type="journal article" date="2003" name="Genome Res.">
        <title>Genome sequence of an M3 strain of Streptococcus pyogenes reveals a large-scale genomic rearrangement in invasive strains and new insights into phage evolution.</title>
        <authorList>
            <person name="Nakagawa I."/>
            <person name="Kurokawa K."/>
            <person name="Yamashita A."/>
            <person name="Nakata M."/>
            <person name="Tomiyasu Y."/>
            <person name="Okahashi N."/>
            <person name="Kawabata S."/>
            <person name="Yamazaki K."/>
            <person name="Shiba T."/>
            <person name="Yasunaga T."/>
            <person name="Hayashi H."/>
            <person name="Hattori M."/>
            <person name="Hamada S."/>
        </authorList>
    </citation>
    <scope>NUCLEOTIDE SEQUENCE [LARGE SCALE GENOMIC DNA]</scope>
    <source>
        <strain>SSI-1</strain>
    </source>
</reference>
<accession>P0DA05</accession>
<accession>Q79WQ5</accession>
<accession>Q8K826</accession>
<gene>
    <name evidence="1" type="primary">atpD</name>
    <name type="ordered locus">SPs1355</name>
</gene>
<dbReference type="EC" id="7.1.2.2" evidence="1"/>
<dbReference type="EMBL" id="BA000034">
    <property type="protein sequence ID" value="BAC64450.1"/>
    <property type="molecule type" value="Genomic_DNA"/>
</dbReference>
<dbReference type="RefSeq" id="WP_002985235.1">
    <property type="nucleotide sequence ID" value="NC_004606.1"/>
</dbReference>
<dbReference type="SMR" id="P0DA05"/>
<dbReference type="GeneID" id="69901114"/>
<dbReference type="KEGG" id="sps:SPs1355"/>
<dbReference type="HOGENOM" id="CLU_022398_0_2_9"/>
<dbReference type="GO" id="GO:0005886">
    <property type="term" value="C:plasma membrane"/>
    <property type="evidence" value="ECO:0007669"/>
    <property type="project" value="UniProtKB-SubCell"/>
</dbReference>
<dbReference type="GO" id="GO:0045259">
    <property type="term" value="C:proton-transporting ATP synthase complex"/>
    <property type="evidence" value="ECO:0007669"/>
    <property type="project" value="UniProtKB-KW"/>
</dbReference>
<dbReference type="GO" id="GO:0005524">
    <property type="term" value="F:ATP binding"/>
    <property type="evidence" value="ECO:0007669"/>
    <property type="project" value="UniProtKB-UniRule"/>
</dbReference>
<dbReference type="GO" id="GO:0016887">
    <property type="term" value="F:ATP hydrolysis activity"/>
    <property type="evidence" value="ECO:0007669"/>
    <property type="project" value="InterPro"/>
</dbReference>
<dbReference type="GO" id="GO:0046933">
    <property type="term" value="F:proton-transporting ATP synthase activity, rotational mechanism"/>
    <property type="evidence" value="ECO:0007669"/>
    <property type="project" value="UniProtKB-UniRule"/>
</dbReference>
<dbReference type="CDD" id="cd18110">
    <property type="entry name" value="ATP-synt_F1_beta_C"/>
    <property type="match status" value="1"/>
</dbReference>
<dbReference type="CDD" id="cd18115">
    <property type="entry name" value="ATP-synt_F1_beta_N"/>
    <property type="match status" value="1"/>
</dbReference>
<dbReference type="CDD" id="cd01133">
    <property type="entry name" value="F1-ATPase_beta_CD"/>
    <property type="match status" value="1"/>
</dbReference>
<dbReference type="FunFam" id="1.10.1140.10:FF:000001">
    <property type="entry name" value="ATP synthase subunit beta"/>
    <property type="match status" value="1"/>
</dbReference>
<dbReference type="FunFam" id="2.40.10.170:FF:000005">
    <property type="entry name" value="ATP synthase subunit beta"/>
    <property type="match status" value="1"/>
</dbReference>
<dbReference type="FunFam" id="3.40.50.300:FF:000004">
    <property type="entry name" value="ATP synthase subunit beta"/>
    <property type="match status" value="1"/>
</dbReference>
<dbReference type="Gene3D" id="2.40.10.170">
    <property type="match status" value="1"/>
</dbReference>
<dbReference type="Gene3D" id="1.10.1140.10">
    <property type="entry name" value="Bovine Mitochondrial F1-atpase, Atp Synthase Beta Chain, Chain D, domain 3"/>
    <property type="match status" value="1"/>
</dbReference>
<dbReference type="Gene3D" id="3.40.50.300">
    <property type="entry name" value="P-loop containing nucleotide triphosphate hydrolases"/>
    <property type="match status" value="1"/>
</dbReference>
<dbReference type="HAMAP" id="MF_01347">
    <property type="entry name" value="ATP_synth_beta_bact"/>
    <property type="match status" value="1"/>
</dbReference>
<dbReference type="InterPro" id="IPR003593">
    <property type="entry name" value="AAA+_ATPase"/>
</dbReference>
<dbReference type="InterPro" id="IPR055190">
    <property type="entry name" value="ATP-synt_VA_C"/>
</dbReference>
<dbReference type="InterPro" id="IPR005722">
    <property type="entry name" value="ATP_synth_F1_bsu"/>
</dbReference>
<dbReference type="InterPro" id="IPR020003">
    <property type="entry name" value="ATPase_a/bsu_AS"/>
</dbReference>
<dbReference type="InterPro" id="IPR050053">
    <property type="entry name" value="ATPase_alpha/beta_chains"/>
</dbReference>
<dbReference type="InterPro" id="IPR004100">
    <property type="entry name" value="ATPase_F1/V1/A1_a/bsu_N"/>
</dbReference>
<dbReference type="InterPro" id="IPR036121">
    <property type="entry name" value="ATPase_F1/V1/A1_a/bsu_N_sf"/>
</dbReference>
<dbReference type="InterPro" id="IPR000194">
    <property type="entry name" value="ATPase_F1/V1/A1_a/bsu_nucl-bd"/>
</dbReference>
<dbReference type="InterPro" id="IPR024034">
    <property type="entry name" value="ATPase_F1/V1_b/a_C"/>
</dbReference>
<dbReference type="InterPro" id="IPR027417">
    <property type="entry name" value="P-loop_NTPase"/>
</dbReference>
<dbReference type="NCBIfam" id="TIGR01039">
    <property type="entry name" value="atpD"/>
    <property type="match status" value="1"/>
</dbReference>
<dbReference type="PANTHER" id="PTHR15184">
    <property type="entry name" value="ATP SYNTHASE"/>
    <property type="match status" value="1"/>
</dbReference>
<dbReference type="PANTHER" id="PTHR15184:SF71">
    <property type="entry name" value="ATP SYNTHASE SUBUNIT BETA, MITOCHONDRIAL"/>
    <property type="match status" value="1"/>
</dbReference>
<dbReference type="Pfam" id="PF00006">
    <property type="entry name" value="ATP-synt_ab"/>
    <property type="match status" value="1"/>
</dbReference>
<dbReference type="Pfam" id="PF02874">
    <property type="entry name" value="ATP-synt_ab_N"/>
    <property type="match status" value="1"/>
</dbReference>
<dbReference type="Pfam" id="PF22919">
    <property type="entry name" value="ATP-synt_VA_C"/>
    <property type="match status" value="1"/>
</dbReference>
<dbReference type="SMART" id="SM00382">
    <property type="entry name" value="AAA"/>
    <property type="match status" value="1"/>
</dbReference>
<dbReference type="SUPFAM" id="SSF47917">
    <property type="entry name" value="C-terminal domain of alpha and beta subunits of F1 ATP synthase"/>
    <property type="match status" value="1"/>
</dbReference>
<dbReference type="SUPFAM" id="SSF50615">
    <property type="entry name" value="N-terminal domain of alpha and beta subunits of F1 ATP synthase"/>
    <property type="match status" value="1"/>
</dbReference>
<dbReference type="SUPFAM" id="SSF52540">
    <property type="entry name" value="P-loop containing nucleoside triphosphate hydrolases"/>
    <property type="match status" value="1"/>
</dbReference>
<dbReference type="PROSITE" id="PS00152">
    <property type="entry name" value="ATPASE_ALPHA_BETA"/>
    <property type="match status" value="1"/>
</dbReference>
<organism>
    <name type="scientific">Streptococcus pyogenes serotype M3 (strain SSI-1)</name>
    <dbReference type="NCBI Taxonomy" id="193567"/>
    <lineage>
        <taxon>Bacteria</taxon>
        <taxon>Bacillati</taxon>
        <taxon>Bacillota</taxon>
        <taxon>Bacilli</taxon>
        <taxon>Lactobacillales</taxon>
        <taxon>Streptococcaceae</taxon>
        <taxon>Streptococcus</taxon>
    </lineage>
</organism>
<proteinExistence type="inferred from homology"/>
<keyword id="KW-0066">ATP synthesis</keyword>
<keyword id="KW-0067">ATP-binding</keyword>
<keyword id="KW-1003">Cell membrane</keyword>
<keyword id="KW-0139">CF(1)</keyword>
<keyword id="KW-0375">Hydrogen ion transport</keyword>
<keyword id="KW-0406">Ion transport</keyword>
<keyword id="KW-0472">Membrane</keyword>
<keyword id="KW-0547">Nucleotide-binding</keyword>
<keyword id="KW-1278">Translocase</keyword>
<keyword id="KW-0813">Transport</keyword>
<protein>
    <recommendedName>
        <fullName evidence="1">ATP synthase subunit beta</fullName>
        <ecNumber evidence="1">7.1.2.2</ecNumber>
    </recommendedName>
    <alternativeName>
        <fullName evidence="1">ATP synthase F1 sector subunit beta</fullName>
    </alternativeName>
    <alternativeName>
        <fullName evidence="1">F-ATPase subunit beta</fullName>
    </alternativeName>
</protein>
<evidence type="ECO:0000255" key="1">
    <source>
        <dbReference type="HAMAP-Rule" id="MF_01347"/>
    </source>
</evidence>
<feature type="chain" id="PRO_0000411284" description="ATP synthase subunit beta">
    <location>
        <begin position="1"/>
        <end position="468"/>
    </location>
</feature>
<feature type="binding site" evidence="1">
    <location>
        <begin position="155"/>
        <end position="162"/>
    </location>
    <ligand>
        <name>ATP</name>
        <dbReference type="ChEBI" id="CHEBI:30616"/>
    </ligand>
</feature>
<comment type="function">
    <text evidence="1">Produces ATP from ADP in the presence of a proton gradient across the membrane. The catalytic sites are hosted primarily by the beta subunits.</text>
</comment>
<comment type="catalytic activity">
    <reaction evidence="1">
        <text>ATP + H2O + 4 H(+)(in) = ADP + phosphate + 5 H(+)(out)</text>
        <dbReference type="Rhea" id="RHEA:57720"/>
        <dbReference type="ChEBI" id="CHEBI:15377"/>
        <dbReference type="ChEBI" id="CHEBI:15378"/>
        <dbReference type="ChEBI" id="CHEBI:30616"/>
        <dbReference type="ChEBI" id="CHEBI:43474"/>
        <dbReference type="ChEBI" id="CHEBI:456216"/>
        <dbReference type="EC" id="7.1.2.2"/>
    </reaction>
</comment>
<comment type="subunit">
    <text evidence="1">F-type ATPases have 2 components, CF(1) - the catalytic core - and CF(0) - the membrane proton channel. CF(1) has five subunits: alpha(3), beta(3), gamma(1), delta(1), epsilon(1). CF(0) has three main subunits: a(1), b(2) and c(9-12). The alpha and beta chains form an alternating ring which encloses part of the gamma chain. CF(1) is attached to CF(0) by a central stalk formed by the gamma and epsilon chains, while a peripheral stalk is formed by the delta and b chains.</text>
</comment>
<comment type="subcellular location">
    <subcellularLocation>
        <location evidence="1">Cell membrane</location>
        <topology evidence="1">Peripheral membrane protein</topology>
    </subcellularLocation>
</comment>
<comment type="similarity">
    <text evidence="1">Belongs to the ATPase alpha/beta chains family.</text>
</comment>
<name>ATPB_STRPQ</name>